<gene>
    <name evidence="1" type="primary">aroE</name>
    <name type="ordered locus">AZOSEA09370</name>
    <name type="ORF">ebA1735</name>
</gene>
<protein>
    <recommendedName>
        <fullName evidence="1">Shikimate dehydrogenase (NADP(+))</fullName>
        <shortName evidence="1">SDH</shortName>
        <ecNumber evidence="1">1.1.1.25</ecNumber>
    </recommendedName>
</protein>
<proteinExistence type="inferred from homology"/>
<comment type="function">
    <text evidence="1">Involved in the biosynthesis of the chorismate, which leads to the biosynthesis of aromatic amino acids. Catalyzes the reversible NADPH linked reduction of 3-dehydroshikimate (DHSA) to yield shikimate (SA).</text>
</comment>
<comment type="catalytic activity">
    <reaction evidence="1">
        <text>shikimate + NADP(+) = 3-dehydroshikimate + NADPH + H(+)</text>
        <dbReference type="Rhea" id="RHEA:17737"/>
        <dbReference type="ChEBI" id="CHEBI:15378"/>
        <dbReference type="ChEBI" id="CHEBI:16630"/>
        <dbReference type="ChEBI" id="CHEBI:36208"/>
        <dbReference type="ChEBI" id="CHEBI:57783"/>
        <dbReference type="ChEBI" id="CHEBI:58349"/>
        <dbReference type="EC" id="1.1.1.25"/>
    </reaction>
</comment>
<comment type="pathway">
    <text evidence="1">Metabolic intermediate biosynthesis; chorismate biosynthesis; chorismate from D-erythrose 4-phosphate and phosphoenolpyruvate: step 4/7.</text>
</comment>
<comment type="subunit">
    <text evidence="1">Homodimer.</text>
</comment>
<comment type="similarity">
    <text evidence="1">Belongs to the shikimate dehydrogenase family.</text>
</comment>
<sequence length="279" mass="29287">MTIDRYAVIGNPISHSRSPAIHAEFARQTGQQLSYEALLAPLDGFRDAVERFRRAGGRGMNVTVPFKLEAFALTDRCAPRASAAGAVNTLAFGPDGIFGDNTDGAGLIRDIVHNLDRPLERQRVLLLGAGGAARGVLLPLLAARPASLTLANRSVDKAHALAAAFRSHAPDVALDACSFVDLAGRVFDVVINATAASLANEAPQLPPGLYAANALAYDMMYGCGDTPFLAAARSDGATQRADGLGMLVEQAAESFLLWRGVRPDTAAVLAALRRQLDGG</sequence>
<dbReference type="EC" id="1.1.1.25" evidence="1"/>
<dbReference type="EMBL" id="CR555306">
    <property type="protein sequence ID" value="CAI07062.1"/>
    <property type="molecule type" value="Genomic_DNA"/>
</dbReference>
<dbReference type="SMR" id="Q5P6J9"/>
<dbReference type="STRING" id="76114.ebA1735"/>
<dbReference type="KEGG" id="eba:ebA1735"/>
<dbReference type="eggNOG" id="COG0169">
    <property type="taxonomic scope" value="Bacteria"/>
</dbReference>
<dbReference type="HOGENOM" id="CLU_044063_2_1_4"/>
<dbReference type="UniPathway" id="UPA00053">
    <property type="reaction ID" value="UER00087"/>
</dbReference>
<dbReference type="Proteomes" id="UP000006552">
    <property type="component" value="Chromosome"/>
</dbReference>
<dbReference type="GO" id="GO:0005829">
    <property type="term" value="C:cytosol"/>
    <property type="evidence" value="ECO:0007669"/>
    <property type="project" value="TreeGrafter"/>
</dbReference>
<dbReference type="GO" id="GO:0050661">
    <property type="term" value="F:NADP binding"/>
    <property type="evidence" value="ECO:0007669"/>
    <property type="project" value="InterPro"/>
</dbReference>
<dbReference type="GO" id="GO:0004764">
    <property type="term" value="F:shikimate 3-dehydrogenase (NADP+) activity"/>
    <property type="evidence" value="ECO:0007669"/>
    <property type="project" value="UniProtKB-UniRule"/>
</dbReference>
<dbReference type="GO" id="GO:0008652">
    <property type="term" value="P:amino acid biosynthetic process"/>
    <property type="evidence" value="ECO:0007669"/>
    <property type="project" value="UniProtKB-KW"/>
</dbReference>
<dbReference type="GO" id="GO:0009073">
    <property type="term" value="P:aromatic amino acid family biosynthetic process"/>
    <property type="evidence" value="ECO:0007669"/>
    <property type="project" value="UniProtKB-KW"/>
</dbReference>
<dbReference type="GO" id="GO:0009423">
    <property type="term" value="P:chorismate biosynthetic process"/>
    <property type="evidence" value="ECO:0007669"/>
    <property type="project" value="UniProtKB-UniRule"/>
</dbReference>
<dbReference type="GO" id="GO:0019632">
    <property type="term" value="P:shikimate metabolic process"/>
    <property type="evidence" value="ECO:0007669"/>
    <property type="project" value="InterPro"/>
</dbReference>
<dbReference type="CDD" id="cd01065">
    <property type="entry name" value="NAD_bind_Shikimate_DH"/>
    <property type="match status" value="1"/>
</dbReference>
<dbReference type="FunFam" id="3.40.50.10860:FF:000006">
    <property type="entry name" value="Shikimate dehydrogenase (NADP(+))"/>
    <property type="match status" value="1"/>
</dbReference>
<dbReference type="Gene3D" id="3.40.50.10860">
    <property type="entry name" value="Leucine Dehydrogenase, chain A, domain 1"/>
    <property type="match status" value="1"/>
</dbReference>
<dbReference type="Gene3D" id="3.40.50.720">
    <property type="entry name" value="NAD(P)-binding Rossmann-like Domain"/>
    <property type="match status" value="1"/>
</dbReference>
<dbReference type="HAMAP" id="MF_00222">
    <property type="entry name" value="Shikimate_DH_AroE"/>
    <property type="match status" value="1"/>
</dbReference>
<dbReference type="InterPro" id="IPR046346">
    <property type="entry name" value="Aminoacid_DH-like_N_sf"/>
</dbReference>
<dbReference type="InterPro" id="IPR036291">
    <property type="entry name" value="NAD(P)-bd_dom_sf"/>
</dbReference>
<dbReference type="InterPro" id="IPR041121">
    <property type="entry name" value="SDH_C"/>
</dbReference>
<dbReference type="InterPro" id="IPR011342">
    <property type="entry name" value="Shikimate_DH"/>
</dbReference>
<dbReference type="InterPro" id="IPR013708">
    <property type="entry name" value="Shikimate_DH-bd_N"/>
</dbReference>
<dbReference type="InterPro" id="IPR022893">
    <property type="entry name" value="Shikimate_DH_fam"/>
</dbReference>
<dbReference type="InterPro" id="IPR006151">
    <property type="entry name" value="Shikm_DH/Glu-tRNA_Rdtase"/>
</dbReference>
<dbReference type="NCBIfam" id="TIGR00507">
    <property type="entry name" value="aroE"/>
    <property type="match status" value="1"/>
</dbReference>
<dbReference type="NCBIfam" id="NF001310">
    <property type="entry name" value="PRK00258.1-2"/>
    <property type="match status" value="1"/>
</dbReference>
<dbReference type="PANTHER" id="PTHR21089:SF1">
    <property type="entry name" value="BIFUNCTIONAL 3-DEHYDROQUINATE DEHYDRATASE_SHIKIMATE DEHYDROGENASE, CHLOROPLASTIC"/>
    <property type="match status" value="1"/>
</dbReference>
<dbReference type="PANTHER" id="PTHR21089">
    <property type="entry name" value="SHIKIMATE DEHYDROGENASE"/>
    <property type="match status" value="1"/>
</dbReference>
<dbReference type="Pfam" id="PF18317">
    <property type="entry name" value="SDH_C"/>
    <property type="match status" value="1"/>
</dbReference>
<dbReference type="Pfam" id="PF01488">
    <property type="entry name" value="Shikimate_DH"/>
    <property type="match status" value="1"/>
</dbReference>
<dbReference type="Pfam" id="PF08501">
    <property type="entry name" value="Shikimate_dh_N"/>
    <property type="match status" value="1"/>
</dbReference>
<dbReference type="SUPFAM" id="SSF53223">
    <property type="entry name" value="Aminoacid dehydrogenase-like, N-terminal domain"/>
    <property type="match status" value="1"/>
</dbReference>
<dbReference type="SUPFAM" id="SSF51735">
    <property type="entry name" value="NAD(P)-binding Rossmann-fold domains"/>
    <property type="match status" value="1"/>
</dbReference>
<evidence type="ECO:0000255" key="1">
    <source>
        <dbReference type="HAMAP-Rule" id="MF_00222"/>
    </source>
</evidence>
<accession>Q5P6J9</accession>
<organism>
    <name type="scientific">Aromatoleum aromaticum (strain DSM 19018 / LMG 30748 / EbN1)</name>
    <name type="common">Azoarcus sp. (strain EbN1)</name>
    <dbReference type="NCBI Taxonomy" id="76114"/>
    <lineage>
        <taxon>Bacteria</taxon>
        <taxon>Pseudomonadati</taxon>
        <taxon>Pseudomonadota</taxon>
        <taxon>Betaproteobacteria</taxon>
        <taxon>Rhodocyclales</taxon>
        <taxon>Rhodocyclaceae</taxon>
        <taxon>Aromatoleum</taxon>
    </lineage>
</organism>
<feature type="chain" id="PRO_1000021257" description="Shikimate dehydrogenase (NADP(+))">
    <location>
        <begin position="1"/>
        <end position="279"/>
    </location>
</feature>
<feature type="active site" description="Proton acceptor" evidence="1">
    <location>
        <position position="67"/>
    </location>
</feature>
<feature type="binding site" evidence="1">
    <location>
        <begin position="16"/>
        <end position="18"/>
    </location>
    <ligand>
        <name>shikimate</name>
        <dbReference type="ChEBI" id="CHEBI:36208"/>
    </ligand>
</feature>
<feature type="binding site" evidence="1">
    <location>
        <position position="63"/>
    </location>
    <ligand>
        <name>shikimate</name>
        <dbReference type="ChEBI" id="CHEBI:36208"/>
    </ligand>
</feature>
<feature type="binding site" evidence="1">
    <location>
        <position position="88"/>
    </location>
    <ligand>
        <name>shikimate</name>
        <dbReference type="ChEBI" id="CHEBI:36208"/>
    </ligand>
</feature>
<feature type="binding site" evidence="1">
    <location>
        <position position="103"/>
    </location>
    <ligand>
        <name>shikimate</name>
        <dbReference type="ChEBI" id="CHEBI:36208"/>
    </ligand>
</feature>
<feature type="binding site" evidence="1">
    <location>
        <begin position="128"/>
        <end position="132"/>
    </location>
    <ligand>
        <name>NADP(+)</name>
        <dbReference type="ChEBI" id="CHEBI:58349"/>
    </ligand>
</feature>
<feature type="binding site" evidence="1">
    <location>
        <position position="219"/>
    </location>
    <ligand>
        <name>NADP(+)</name>
        <dbReference type="ChEBI" id="CHEBI:58349"/>
    </ligand>
</feature>
<feature type="binding site" evidence="1">
    <location>
        <position position="221"/>
    </location>
    <ligand>
        <name>shikimate</name>
        <dbReference type="ChEBI" id="CHEBI:36208"/>
    </ligand>
</feature>
<feature type="binding site" evidence="1">
    <location>
        <position position="243"/>
    </location>
    <ligand>
        <name>NADP(+)</name>
        <dbReference type="ChEBI" id="CHEBI:58349"/>
    </ligand>
</feature>
<reference key="1">
    <citation type="journal article" date="2005" name="Arch. Microbiol.">
        <title>The genome sequence of an anaerobic aromatic-degrading denitrifying bacterium, strain EbN1.</title>
        <authorList>
            <person name="Rabus R."/>
            <person name="Kube M."/>
            <person name="Heider J."/>
            <person name="Beck A."/>
            <person name="Heitmann K."/>
            <person name="Widdel F."/>
            <person name="Reinhardt R."/>
        </authorList>
    </citation>
    <scope>NUCLEOTIDE SEQUENCE [LARGE SCALE GENOMIC DNA]</scope>
    <source>
        <strain>DSM 19018 / LMG 30748 / EbN1</strain>
    </source>
</reference>
<name>AROE_AROAE</name>
<keyword id="KW-0028">Amino-acid biosynthesis</keyword>
<keyword id="KW-0057">Aromatic amino acid biosynthesis</keyword>
<keyword id="KW-0521">NADP</keyword>
<keyword id="KW-0560">Oxidoreductase</keyword>
<keyword id="KW-1185">Reference proteome</keyword>